<reference key="1">
    <citation type="journal article" date="2003" name="Proc. Natl. Acad. Sci. U.S.A.">
        <title>The complete genome sequence of the carcinogenic bacterium Helicobacter hepaticus.</title>
        <authorList>
            <person name="Suerbaum S."/>
            <person name="Josenhans C."/>
            <person name="Sterzenbach T."/>
            <person name="Drescher B."/>
            <person name="Brandt P."/>
            <person name="Bell M."/>
            <person name="Droege M."/>
            <person name="Fartmann B."/>
            <person name="Fischer H.-P."/>
            <person name="Ge Z."/>
            <person name="Hoerster A."/>
            <person name="Holland R."/>
            <person name="Klein K."/>
            <person name="Koenig J."/>
            <person name="Macko L."/>
            <person name="Mendz G.L."/>
            <person name="Nyakatura G."/>
            <person name="Schauer D.B."/>
            <person name="Shen Z."/>
            <person name="Weber J."/>
            <person name="Frosch M."/>
            <person name="Fox J.G."/>
        </authorList>
    </citation>
    <scope>NUCLEOTIDE SEQUENCE [LARGE SCALE GENOMIC DNA]</scope>
    <source>
        <strain>ATCC 51449 / 3B1</strain>
    </source>
</reference>
<comment type="catalytic activity">
    <reaction evidence="1">
        <text>(S)-malate + a quinone = a quinol + oxaloacetate</text>
        <dbReference type="Rhea" id="RHEA:46012"/>
        <dbReference type="ChEBI" id="CHEBI:15589"/>
        <dbReference type="ChEBI" id="CHEBI:16452"/>
        <dbReference type="ChEBI" id="CHEBI:24646"/>
        <dbReference type="ChEBI" id="CHEBI:132124"/>
        <dbReference type="EC" id="1.1.5.4"/>
    </reaction>
</comment>
<comment type="cofactor">
    <cofactor evidence="1">
        <name>FAD</name>
        <dbReference type="ChEBI" id="CHEBI:57692"/>
    </cofactor>
</comment>
<comment type="pathway">
    <text evidence="1">Carbohydrate metabolism; tricarboxylic acid cycle; oxaloacetate from (S)-malate (quinone route): step 1/1.</text>
</comment>
<comment type="similarity">
    <text evidence="1">Belongs to the MQO family.</text>
</comment>
<dbReference type="EC" id="1.1.5.4" evidence="1"/>
<dbReference type="EMBL" id="AE017125">
    <property type="protein sequence ID" value="AAP78317.1"/>
    <property type="molecule type" value="Genomic_DNA"/>
</dbReference>
<dbReference type="RefSeq" id="WP_011116559.1">
    <property type="nucleotide sequence ID" value="NC_004917.1"/>
</dbReference>
<dbReference type="SMR" id="Q7VFF6"/>
<dbReference type="STRING" id="235279.HH_1720"/>
<dbReference type="KEGG" id="hhe:HH_1720"/>
<dbReference type="eggNOG" id="COG0579">
    <property type="taxonomic scope" value="Bacteria"/>
</dbReference>
<dbReference type="HOGENOM" id="CLU_028151_0_0_7"/>
<dbReference type="OrthoDB" id="9763983at2"/>
<dbReference type="UniPathway" id="UPA00223">
    <property type="reaction ID" value="UER01008"/>
</dbReference>
<dbReference type="Proteomes" id="UP000002495">
    <property type="component" value="Chromosome"/>
</dbReference>
<dbReference type="GO" id="GO:0047545">
    <property type="term" value="F:2-hydroxyglutarate dehydrogenase activity"/>
    <property type="evidence" value="ECO:0007669"/>
    <property type="project" value="TreeGrafter"/>
</dbReference>
<dbReference type="GO" id="GO:0008924">
    <property type="term" value="F:L-malate dehydrogenase (quinone) activity"/>
    <property type="evidence" value="ECO:0007669"/>
    <property type="project" value="UniProtKB-UniRule"/>
</dbReference>
<dbReference type="GO" id="GO:0006099">
    <property type="term" value="P:tricarboxylic acid cycle"/>
    <property type="evidence" value="ECO:0007669"/>
    <property type="project" value="UniProtKB-UniRule"/>
</dbReference>
<dbReference type="HAMAP" id="MF_00212">
    <property type="entry name" value="MQO"/>
    <property type="match status" value="1"/>
</dbReference>
<dbReference type="InterPro" id="IPR036188">
    <property type="entry name" value="FAD/NAD-bd_sf"/>
</dbReference>
<dbReference type="InterPro" id="IPR006231">
    <property type="entry name" value="MQO"/>
</dbReference>
<dbReference type="NCBIfam" id="TIGR01320">
    <property type="entry name" value="mal_quin_oxido"/>
    <property type="match status" value="1"/>
</dbReference>
<dbReference type="NCBIfam" id="NF003605">
    <property type="entry name" value="PRK05257.1-4"/>
    <property type="match status" value="1"/>
</dbReference>
<dbReference type="NCBIfam" id="NF003606">
    <property type="entry name" value="PRK05257.2-1"/>
    <property type="match status" value="1"/>
</dbReference>
<dbReference type="NCBIfam" id="NF003611">
    <property type="entry name" value="PRK05257.3-2"/>
    <property type="match status" value="1"/>
</dbReference>
<dbReference type="NCBIfam" id="NF009875">
    <property type="entry name" value="PRK13339.1"/>
    <property type="match status" value="1"/>
</dbReference>
<dbReference type="PANTHER" id="PTHR43104">
    <property type="entry name" value="L-2-HYDROXYGLUTARATE DEHYDROGENASE, MITOCHONDRIAL"/>
    <property type="match status" value="1"/>
</dbReference>
<dbReference type="PANTHER" id="PTHR43104:SF2">
    <property type="entry name" value="L-2-HYDROXYGLUTARATE DEHYDROGENASE, MITOCHONDRIAL"/>
    <property type="match status" value="1"/>
</dbReference>
<dbReference type="Pfam" id="PF06039">
    <property type="entry name" value="Mqo"/>
    <property type="match status" value="1"/>
</dbReference>
<dbReference type="SUPFAM" id="SSF51905">
    <property type="entry name" value="FAD/NAD(P)-binding domain"/>
    <property type="match status" value="1"/>
</dbReference>
<accession>Q7VFF6</accession>
<gene>
    <name evidence="1" type="primary">mqo</name>
    <name type="ordered locus">HH_1720</name>
</gene>
<name>MQO_HELHP</name>
<keyword id="KW-0274">FAD</keyword>
<keyword id="KW-0285">Flavoprotein</keyword>
<keyword id="KW-0560">Oxidoreductase</keyword>
<keyword id="KW-1185">Reference proteome</keyword>
<keyword id="KW-0816">Tricarboxylic acid cycle</keyword>
<feature type="chain" id="PRO_0000128716" description="Probable malate:quinone oxidoreductase">
    <location>
        <begin position="1"/>
        <end position="494"/>
    </location>
</feature>
<proteinExistence type="inferred from homology"/>
<organism>
    <name type="scientific">Helicobacter hepaticus (strain ATCC 51449 / 3B1)</name>
    <dbReference type="NCBI Taxonomy" id="235279"/>
    <lineage>
        <taxon>Bacteria</taxon>
        <taxon>Pseudomonadati</taxon>
        <taxon>Campylobacterota</taxon>
        <taxon>Epsilonproteobacteria</taxon>
        <taxon>Campylobacterales</taxon>
        <taxon>Helicobacteraceae</taxon>
        <taxon>Helicobacter</taxon>
    </lineage>
</organism>
<evidence type="ECO:0000255" key="1">
    <source>
        <dbReference type="HAMAP-Rule" id="MF_00212"/>
    </source>
</evidence>
<protein>
    <recommendedName>
        <fullName evidence="1">Probable malate:quinone oxidoreductase</fullName>
        <ecNumber evidence="1">1.1.5.4</ecNumber>
    </recommendedName>
    <alternativeName>
        <fullName evidence="1">MQO</fullName>
    </alternativeName>
    <alternativeName>
        <fullName evidence="1">Malate dehydrogenase [quinone]</fullName>
    </alternativeName>
</protein>
<sequence>MSEDSEVVLVGGGIMSLTLAAMLRELKPSLHISVYEMFEDLATESSSVWNNAGTGHQALCELNYTPQKEDGSIDVSKALKINQQFELSKEFWAYCIRKQILKGAHTFLNPVPHLSFVVDDIVPYLKKRYETLKDSPLFKNMIYTEDREQIKEWAPLLLEGRGETQKMAVTYMAGGSDVDFGEIARQFGEKLSQKEGFDVYTHHKVRDLTKEGNIWLLDVIDTKSYERKQVKAKFVFLGAGGGSFPLLQKSGIPEGRGYGGFPVGGLWLICNNREIIEKHNAKIYGKASIGDPPMSVPHLDTRIIRGKKELLFGPYAGFNTKFLKKGSFFDFPSSIRLNNFIPMIQAGIDNVPLTIYLIKQILSTDRMRMRKLEVFFPAAQFPDWNAQFAGQRVQVIKKDKNGRGSLQFGTEVITSSDGSLAALLGASPGASTVVDIMLEVLKRCFGDEMKTSAWQDKLAEMVPSYNRSLEENITHFNECRLKTAQTLHLPFDEI</sequence>